<gene>
    <name evidence="1" type="primary">hisF</name>
    <name type="ordered locus">CV_0618</name>
</gene>
<protein>
    <recommendedName>
        <fullName evidence="1">Imidazole glycerol phosphate synthase subunit HisF</fullName>
        <ecNumber evidence="1">4.3.2.10</ecNumber>
    </recommendedName>
    <alternativeName>
        <fullName evidence="1">IGP synthase cyclase subunit</fullName>
    </alternativeName>
    <alternativeName>
        <fullName evidence="1">IGP synthase subunit HisF</fullName>
    </alternativeName>
    <alternativeName>
        <fullName evidence="1">ImGP synthase subunit HisF</fullName>
        <shortName evidence="1">IGPS subunit HisF</shortName>
    </alternativeName>
</protein>
<evidence type="ECO:0000255" key="1">
    <source>
        <dbReference type="HAMAP-Rule" id="MF_01013"/>
    </source>
</evidence>
<sequence>MLAKRIIPCLDVTAGRVVKGVNFLGLRDAGDPVEIARRYNEQGADELTFLDITASSDQRDIILHVIEAVADQVFIPLTVGGGVRSIADIRRLLNAGADKVSINTAAVTHPEFVQQASEHFGNQCIVVALDAKAVTPENDRWEIFTHGGRNRTGLDAVEWARKMQQLGAGEILLTSMDRDGTKAGFNLPLTRAVSDAVNIPVIASGGVGNLQHLVDGVKEGHADAVLAASIFHFGEYTVDQAKQAMRAAGIEVRL</sequence>
<name>HIS6_CHRVO</name>
<proteinExistence type="inferred from homology"/>
<accession>Q7P0E9</accession>
<dbReference type="EC" id="4.3.2.10" evidence="1"/>
<dbReference type="EMBL" id="AE016825">
    <property type="protein sequence ID" value="AAQ58294.1"/>
    <property type="molecule type" value="Genomic_DNA"/>
</dbReference>
<dbReference type="RefSeq" id="WP_011134173.1">
    <property type="nucleotide sequence ID" value="NC_005085.1"/>
</dbReference>
<dbReference type="SMR" id="Q7P0E9"/>
<dbReference type="STRING" id="243365.CV_0618"/>
<dbReference type="GeneID" id="66365476"/>
<dbReference type="KEGG" id="cvi:CV_0618"/>
<dbReference type="eggNOG" id="COG0107">
    <property type="taxonomic scope" value="Bacteria"/>
</dbReference>
<dbReference type="HOGENOM" id="CLU_048577_4_0_4"/>
<dbReference type="OrthoDB" id="9781903at2"/>
<dbReference type="UniPathway" id="UPA00031">
    <property type="reaction ID" value="UER00010"/>
</dbReference>
<dbReference type="Proteomes" id="UP000001424">
    <property type="component" value="Chromosome"/>
</dbReference>
<dbReference type="GO" id="GO:0005737">
    <property type="term" value="C:cytoplasm"/>
    <property type="evidence" value="ECO:0007669"/>
    <property type="project" value="UniProtKB-SubCell"/>
</dbReference>
<dbReference type="GO" id="GO:0000107">
    <property type="term" value="F:imidazoleglycerol-phosphate synthase activity"/>
    <property type="evidence" value="ECO:0007669"/>
    <property type="project" value="UniProtKB-UniRule"/>
</dbReference>
<dbReference type="GO" id="GO:0016829">
    <property type="term" value="F:lyase activity"/>
    <property type="evidence" value="ECO:0007669"/>
    <property type="project" value="UniProtKB-KW"/>
</dbReference>
<dbReference type="GO" id="GO:0000105">
    <property type="term" value="P:L-histidine biosynthetic process"/>
    <property type="evidence" value="ECO:0007669"/>
    <property type="project" value="UniProtKB-UniRule"/>
</dbReference>
<dbReference type="CDD" id="cd04731">
    <property type="entry name" value="HisF"/>
    <property type="match status" value="1"/>
</dbReference>
<dbReference type="FunFam" id="3.20.20.70:FF:000006">
    <property type="entry name" value="Imidazole glycerol phosphate synthase subunit HisF"/>
    <property type="match status" value="1"/>
</dbReference>
<dbReference type="Gene3D" id="3.20.20.70">
    <property type="entry name" value="Aldolase class I"/>
    <property type="match status" value="1"/>
</dbReference>
<dbReference type="HAMAP" id="MF_01013">
    <property type="entry name" value="HisF"/>
    <property type="match status" value="1"/>
</dbReference>
<dbReference type="InterPro" id="IPR013785">
    <property type="entry name" value="Aldolase_TIM"/>
</dbReference>
<dbReference type="InterPro" id="IPR006062">
    <property type="entry name" value="His_biosynth"/>
</dbReference>
<dbReference type="InterPro" id="IPR004651">
    <property type="entry name" value="HisF"/>
</dbReference>
<dbReference type="InterPro" id="IPR050064">
    <property type="entry name" value="IGPS_HisA/HisF"/>
</dbReference>
<dbReference type="InterPro" id="IPR011060">
    <property type="entry name" value="RibuloseP-bd_barrel"/>
</dbReference>
<dbReference type="NCBIfam" id="TIGR00735">
    <property type="entry name" value="hisF"/>
    <property type="match status" value="1"/>
</dbReference>
<dbReference type="PANTHER" id="PTHR21235:SF2">
    <property type="entry name" value="IMIDAZOLE GLYCEROL PHOSPHATE SYNTHASE HISHF"/>
    <property type="match status" value="1"/>
</dbReference>
<dbReference type="PANTHER" id="PTHR21235">
    <property type="entry name" value="IMIDAZOLE GLYCEROL PHOSPHATE SYNTHASE SUBUNIT HISF/H IGP SYNTHASE SUBUNIT HISF/H"/>
    <property type="match status" value="1"/>
</dbReference>
<dbReference type="Pfam" id="PF00977">
    <property type="entry name" value="His_biosynth"/>
    <property type="match status" value="1"/>
</dbReference>
<dbReference type="SUPFAM" id="SSF51366">
    <property type="entry name" value="Ribulose-phoshate binding barrel"/>
    <property type="match status" value="1"/>
</dbReference>
<organism>
    <name type="scientific">Chromobacterium violaceum (strain ATCC 12472 / DSM 30191 / JCM 1249 / CCUG 213 / NBRC 12614 / NCIMB 9131 / NCTC 9757 / MK)</name>
    <dbReference type="NCBI Taxonomy" id="243365"/>
    <lineage>
        <taxon>Bacteria</taxon>
        <taxon>Pseudomonadati</taxon>
        <taxon>Pseudomonadota</taxon>
        <taxon>Betaproteobacteria</taxon>
        <taxon>Neisseriales</taxon>
        <taxon>Chromobacteriaceae</taxon>
        <taxon>Chromobacterium</taxon>
    </lineage>
</organism>
<feature type="chain" id="PRO_0000142143" description="Imidazole glycerol phosphate synthase subunit HisF">
    <location>
        <begin position="1"/>
        <end position="254"/>
    </location>
</feature>
<feature type="active site" evidence="1">
    <location>
        <position position="11"/>
    </location>
</feature>
<feature type="active site" evidence="1">
    <location>
        <position position="130"/>
    </location>
</feature>
<keyword id="KW-0028">Amino-acid biosynthesis</keyword>
<keyword id="KW-0963">Cytoplasm</keyword>
<keyword id="KW-0368">Histidine biosynthesis</keyword>
<keyword id="KW-0456">Lyase</keyword>
<keyword id="KW-1185">Reference proteome</keyword>
<comment type="function">
    <text evidence="1">IGPS catalyzes the conversion of PRFAR and glutamine to IGP, AICAR and glutamate. The HisF subunit catalyzes the cyclization activity that produces IGP and AICAR from PRFAR using the ammonia provided by the HisH subunit.</text>
</comment>
<comment type="catalytic activity">
    <reaction evidence="1">
        <text>5-[(5-phospho-1-deoxy-D-ribulos-1-ylimino)methylamino]-1-(5-phospho-beta-D-ribosyl)imidazole-4-carboxamide + L-glutamine = D-erythro-1-(imidazol-4-yl)glycerol 3-phosphate + 5-amino-1-(5-phospho-beta-D-ribosyl)imidazole-4-carboxamide + L-glutamate + H(+)</text>
        <dbReference type="Rhea" id="RHEA:24793"/>
        <dbReference type="ChEBI" id="CHEBI:15378"/>
        <dbReference type="ChEBI" id="CHEBI:29985"/>
        <dbReference type="ChEBI" id="CHEBI:58278"/>
        <dbReference type="ChEBI" id="CHEBI:58359"/>
        <dbReference type="ChEBI" id="CHEBI:58475"/>
        <dbReference type="ChEBI" id="CHEBI:58525"/>
        <dbReference type="EC" id="4.3.2.10"/>
    </reaction>
</comment>
<comment type="pathway">
    <text evidence="1">Amino-acid biosynthesis; L-histidine biosynthesis; L-histidine from 5-phospho-alpha-D-ribose 1-diphosphate: step 5/9.</text>
</comment>
<comment type="subunit">
    <text evidence="1">Heterodimer of HisH and HisF.</text>
</comment>
<comment type="subcellular location">
    <subcellularLocation>
        <location evidence="1">Cytoplasm</location>
    </subcellularLocation>
</comment>
<comment type="similarity">
    <text evidence="1">Belongs to the HisA/HisF family.</text>
</comment>
<reference key="1">
    <citation type="journal article" date="2003" name="Proc. Natl. Acad. Sci. U.S.A.">
        <title>The complete genome sequence of Chromobacterium violaceum reveals remarkable and exploitable bacterial adaptability.</title>
        <authorList>
            <person name="Vasconcelos A.T.R."/>
            <person name="de Almeida D.F."/>
            <person name="Hungria M."/>
            <person name="Guimaraes C.T."/>
            <person name="Antonio R.V."/>
            <person name="Almeida F.C."/>
            <person name="de Almeida L.G.P."/>
            <person name="de Almeida R."/>
            <person name="Alves-Gomes J.A."/>
            <person name="Andrade E.M."/>
            <person name="Araripe J."/>
            <person name="de Araujo M.F.F."/>
            <person name="Astolfi-Filho S."/>
            <person name="Azevedo V."/>
            <person name="Baptista A.J."/>
            <person name="Bataus L.A.M."/>
            <person name="Batista J.S."/>
            <person name="Belo A."/>
            <person name="van den Berg C."/>
            <person name="Bogo M."/>
            <person name="Bonatto S."/>
            <person name="Bordignon J."/>
            <person name="Brigido M.M."/>
            <person name="Brito C.A."/>
            <person name="Brocchi M."/>
            <person name="Burity H.A."/>
            <person name="Camargo A.A."/>
            <person name="Cardoso D.D.P."/>
            <person name="Carneiro N.P."/>
            <person name="Carraro D.M."/>
            <person name="Carvalho C.M.B."/>
            <person name="Cascardo J.C.M."/>
            <person name="Cavada B.S."/>
            <person name="Chueire L.M.O."/>
            <person name="Creczynski-Pasa T.B."/>
            <person name="Cunha-Junior N.C."/>
            <person name="Fagundes N."/>
            <person name="Falcao C.L."/>
            <person name="Fantinatti F."/>
            <person name="Farias I.P."/>
            <person name="Felipe M.S.S."/>
            <person name="Ferrari L.P."/>
            <person name="Ferro J.A."/>
            <person name="Ferro M.I.T."/>
            <person name="Franco G.R."/>
            <person name="Freitas N.S.A."/>
            <person name="Furlan L.R."/>
            <person name="Gazzinelli R.T."/>
            <person name="Gomes E.A."/>
            <person name="Goncalves P.R."/>
            <person name="Grangeiro T.B."/>
            <person name="Grattapaglia D."/>
            <person name="Grisard E.C."/>
            <person name="Hanna E.S."/>
            <person name="Jardim S.N."/>
            <person name="Laurino J."/>
            <person name="Leoi L.C.T."/>
            <person name="Lima L.F.A."/>
            <person name="Loureiro M.F."/>
            <person name="Lyra M.C.C.P."/>
            <person name="Madeira H.M.F."/>
            <person name="Manfio G.P."/>
            <person name="Maranhao A.Q."/>
            <person name="Martins W.S."/>
            <person name="di Mauro S.M.Z."/>
            <person name="de Medeiros S.R.B."/>
            <person name="Meissner R.V."/>
            <person name="Moreira M.A.M."/>
            <person name="Nascimento F.F."/>
            <person name="Nicolas M.F."/>
            <person name="Oliveira J.G."/>
            <person name="Oliveira S.C."/>
            <person name="Paixao R.F.C."/>
            <person name="Parente J.A."/>
            <person name="Pedrosa F.O."/>
            <person name="Pena S.D.J."/>
            <person name="Pereira J.O."/>
            <person name="Pereira M."/>
            <person name="Pinto L.S.R.C."/>
            <person name="Pinto L.S."/>
            <person name="Porto J.I.R."/>
            <person name="Potrich D.P."/>
            <person name="Ramalho-Neto C.E."/>
            <person name="Reis A.M.M."/>
            <person name="Rigo L.U."/>
            <person name="Rondinelli E."/>
            <person name="Santos E.B.P."/>
            <person name="Santos F.R."/>
            <person name="Schneider M.P.C."/>
            <person name="Seuanez H.N."/>
            <person name="Silva A.M.R."/>
            <person name="da Silva A.L.C."/>
            <person name="Silva D.W."/>
            <person name="Silva R."/>
            <person name="Simoes I.C."/>
            <person name="Simon D."/>
            <person name="Soares C.M.A."/>
            <person name="Soares R.B.A."/>
            <person name="Souza E.M."/>
            <person name="Souza K.R.L."/>
            <person name="Souza R.C."/>
            <person name="Steffens M.B.R."/>
            <person name="Steindel M."/>
            <person name="Teixeira S.R."/>
            <person name="Urmenyi T."/>
            <person name="Vettore A."/>
            <person name="Wassem R."/>
            <person name="Zaha A."/>
            <person name="Simpson A.J.G."/>
        </authorList>
    </citation>
    <scope>NUCLEOTIDE SEQUENCE [LARGE SCALE GENOMIC DNA]</scope>
    <source>
        <strain>ATCC 12472 / DSM 30191 / JCM 1249 / CCUG 213 / NBRC 12614 / NCIMB 9131 / NCTC 9757 / MK</strain>
    </source>
</reference>